<organism>
    <name type="scientific">Escherichia coli O81 (strain ED1a)</name>
    <dbReference type="NCBI Taxonomy" id="585397"/>
    <lineage>
        <taxon>Bacteria</taxon>
        <taxon>Pseudomonadati</taxon>
        <taxon>Pseudomonadota</taxon>
        <taxon>Gammaproteobacteria</taxon>
        <taxon>Enterobacterales</taxon>
        <taxon>Enterobacteriaceae</taxon>
        <taxon>Escherichia</taxon>
    </lineage>
</organism>
<comment type="catalytic activity">
    <reaction evidence="1">
        <text>CMP + ATP = CDP + ADP</text>
        <dbReference type="Rhea" id="RHEA:11600"/>
        <dbReference type="ChEBI" id="CHEBI:30616"/>
        <dbReference type="ChEBI" id="CHEBI:58069"/>
        <dbReference type="ChEBI" id="CHEBI:60377"/>
        <dbReference type="ChEBI" id="CHEBI:456216"/>
        <dbReference type="EC" id="2.7.4.25"/>
    </reaction>
</comment>
<comment type="catalytic activity">
    <reaction evidence="1">
        <text>dCMP + ATP = dCDP + ADP</text>
        <dbReference type="Rhea" id="RHEA:25094"/>
        <dbReference type="ChEBI" id="CHEBI:30616"/>
        <dbReference type="ChEBI" id="CHEBI:57566"/>
        <dbReference type="ChEBI" id="CHEBI:58593"/>
        <dbReference type="ChEBI" id="CHEBI:456216"/>
        <dbReference type="EC" id="2.7.4.25"/>
    </reaction>
</comment>
<comment type="subcellular location">
    <subcellularLocation>
        <location evidence="1">Cytoplasm</location>
    </subcellularLocation>
</comment>
<comment type="similarity">
    <text evidence="1">Belongs to the cytidylate kinase family. Type 1 subfamily.</text>
</comment>
<keyword id="KW-0067">ATP-binding</keyword>
<keyword id="KW-0963">Cytoplasm</keyword>
<keyword id="KW-0418">Kinase</keyword>
<keyword id="KW-0547">Nucleotide-binding</keyword>
<keyword id="KW-0808">Transferase</keyword>
<name>KCY_ECO81</name>
<accession>B7MS25</accession>
<dbReference type="EC" id="2.7.4.25" evidence="1"/>
<dbReference type="EMBL" id="CU928162">
    <property type="protein sequence ID" value="CAR07139.1"/>
    <property type="molecule type" value="Genomic_DNA"/>
</dbReference>
<dbReference type="RefSeq" id="WP_000125016.1">
    <property type="nucleotide sequence ID" value="NC_011745.1"/>
</dbReference>
<dbReference type="SMR" id="B7MS25"/>
<dbReference type="GeneID" id="93776507"/>
<dbReference type="KEGG" id="ecq:ECED1_0937"/>
<dbReference type="HOGENOM" id="CLU_079959_0_2_6"/>
<dbReference type="Proteomes" id="UP000000748">
    <property type="component" value="Chromosome"/>
</dbReference>
<dbReference type="GO" id="GO:0005829">
    <property type="term" value="C:cytosol"/>
    <property type="evidence" value="ECO:0007669"/>
    <property type="project" value="TreeGrafter"/>
</dbReference>
<dbReference type="GO" id="GO:0005524">
    <property type="term" value="F:ATP binding"/>
    <property type="evidence" value="ECO:0007669"/>
    <property type="project" value="UniProtKB-UniRule"/>
</dbReference>
<dbReference type="GO" id="GO:0036430">
    <property type="term" value="F:CMP kinase activity"/>
    <property type="evidence" value="ECO:0007669"/>
    <property type="project" value="RHEA"/>
</dbReference>
<dbReference type="GO" id="GO:0036431">
    <property type="term" value="F:dCMP kinase activity"/>
    <property type="evidence" value="ECO:0007669"/>
    <property type="project" value="RHEA"/>
</dbReference>
<dbReference type="GO" id="GO:0015949">
    <property type="term" value="P:nucleobase-containing small molecule interconversion"/>
    <property type="evidence" value="ECO:0007669"/>
    <property type="project" value="TreeGrafter"/>
</dbReference>
<dbReference type="GO" id="GO:0006220">
    <property type="term" value="P:pyrimidine nucleotide metabolic process"/>
    <property type="evidence" value="ECO:0007669"/>
    <property type="project" value="UniProtKB-UniRule"/>
</dbReference>
<dbReference type="CDD" id="cd02020">
    <property type="entry name" value="CMPK"/>
    <property type="match status" value="1"/>
</dbReference>
<dbReference type="FunFam" id="3.40.50.300:FF:000262">
    <property type="entry name" value="Cytidylate kinase"/>
    <property type="match status" value="1"/>
</dbReference>
<dbReference type="Gene3D" id="3.40.50.300">
    <property type="entry name" value="P-loop containing nucleotide triphosphate hydrolases"/>
    <property type="match status" value="1"/>
</dbReference>
<dbReference type="HAMAP" id="MF_00238">
    <property type="entry name" value="Cytidyl_kinase_type1"/>
    <property type="match status" value="1"/>
</dbReference>
<dbReference type="InterPro" id="IPR003136">
    <property type="entry name" value="Cytidylate_kin"/>
</dbReference>
<dbReference type="InterPro" id="IPR011994">
    <property type="entry name" value="Cytidylate_kinase_dom"/>
</dbReference>
<dbReference type="InterPro" id="IPR027417">
    <property type="entry name" value="P-loop_NTPase"/>
</dbReference>
<dbReference type="NCBIfam" id="TIGR00017">
    <property type="entry name" value="cmk"/>
    <property type="match status" value="1"/>
</dbReference>
<dbReference type="PANTHER" id="PTHR21299:SF2">
    <property type="entry name" value="CYTIDYLATE KINASE"/>
    <property type="match status" value="1"/>
</dbReference>
<dbReference type="PANTHER" id="PTHR21299">
    <property type="entry name" value="CYTIDYLATE KINASE/PANTOATE-BETA-ALANINE LIGASE"/>
    <property type="match status" value="1"/>
</dbReference>
<dbReference type="Pfam" id="PF02224">
    <property type="entry name" value="Cytidylate_kin"/>
    <property type="match status" value="1"/>
</dbReference>
<dbReference type="SUPFAM" id="SSF52540">
    <property type="entry name" value="P-loop containing nucleoside triphosphate hydrolases"/>
    <property type="match status" value="1"/>
</dbReference>
<evidence type="ECO:0000255" key="1">
    <source>
        <dbReference type="HAMAP-Rule" id="MF_00238"/>
    </source>
</evidence>
<sequence>MTAIAPVITIDGPSGAGKGTLCKAMAEALQWHLLDSGAIYRVLALAALHHHVDVASEDALVPLASHLDVRFVSTNGNLEVILEGEDVSGEIRTQEVANAASQVAAFPRVREALLRRQRAFRELPGLIADGRDMGTVVFPDAPVKIFLDASSEERAHRRMLQLQEKGFSVNFERLLAEIKERDDRDRNRAVAPLVPAADALVLDSTTLSIEQVIEKALQYARQKLALA</sequence>
<reference key="1">
    <citation type="journal article" date="2009" name="PLoS Genet.">
        <title>Organised genome dynamics in the Escherichia coli species results in highly diverse adaptive paths.</title>
        <authorList>
            <person name="Touchon M."/>
            <person name="Hoede C."/>
            <person name="Tenaillon O."/>
            <person name="Barbe V."/>
            <person name="Baeriswyl S."/>
            <person name="Bidet P."/>
            <person name="Bingen E."/>
            <person name="Bonacorsi S."/>
            <person name="Bouchier C."/>
            <person name="Bouvet O."/>
            <person name="Calteau A."/>
            <person name="Chiapello H."/>
            <person name="Clermont O."/>
            <person name="Cruveiller S."/>
            <person name="Danchin A."/>
            <person name="Diard M."/>
            <person name="Dossat C."/>
            <person name="Karoui M.E."/>
            <person name="Frapy E."/>
            <person name="Garry L."/>
            <person name="Ghigo J.M."/>
            <person name="Gilles A.M."/>
            <person name="Johnson J."/>
            <person name="Le Bouguenec C."/>
            <person name="Lescat M."/>
            <person name="Mangenot S."/>
            <person name="Martinez-Jehanne V."/>
            <person name="Matic I."/>
            <person name="Nassif X."/>
            <person name="Oztas S."/>
            <person name="Petit M.A."/>
            <person name="Pichon C."/>
            <person name="Rouy Z."/>
            <person name="Ruf C.S."/>
            <person name="Schneider D."/>
            <person name="Tourret J."/>
            <person name="Vacherie B."/>
            <person name="Vallenet D."/>
            <person name="Medigue C."/>
            <person name="Rocha E.P.C."/>
            <person name="Denamur E."/>
        </authorList>
    </citation>
    <scope>NUCLEOTIDE SEQUENCE [LARGE SCALE GENOMIC DNA]</scope>
    <source>
        <strain>ED1a</strain>
    </source>
</reference>
<gene>
    <name evidence="1" type="primary">cmk</name>
    <name type="ordered locus">ECED1_0937</name>
</gene>
<feature type="chain" id="PRO_1000125287" description="Cytidylate kinase">
    <location>
        <begin position="1"/>
        <end position="227"/>
    </location>
</feature>
<feature type="binding site" evidence="1">
    <location>
        <begin position="12"/>
        <end position="20"/>
    </location>
    <ligand>
        <name>ATP</name>
        <dbReference type="ChEBI" id="CHEBI:30616"/>
    </ligand>
</feature>
<proteinExistence type="inferred from homology"/>
<protein>
    <recommendedName>
        <fullName evidence="1">Cytidylate kinase</fullName>
        <shortName evidence="1">CK</shortName>
        <ecNumber evidence="1">2.7.4.25</ecNumber>
    </recommendedName>
    <alternativeName>
        <fullName evidence="1">Cytidine monophosphate kinase</fullName>
        <shortName evidence="1">CMP kinase</shortName>
    </alternativeName>
</protein>